<accession>P57488</accession>
<evidence type="ECO:0000250" key="1"/>
<evidence type="ECO:0000305" key="2"/>
<protein>
    <recommendedName>
        <fullName>Ribosomal RNA small subunit methyltransferase E</fullName>
        <ecNumber>2.1.1.193</ecNumber>
    </recommendedName>
    <alternativeName>
        <fullName>16S rRNA m3U1498 methyltransferase</fullName>
    </alternativeName>
</protein>
<reference key="1">
    <citation type="journal article" date="2000" name="Nature">
        <title>Genome sequence of the endocellular bacterial symbiont of aphids Buchnera sp. APS.</title>
        <authorList>
            <person name="Shigenobu S."/>
            <person name="Watanabe H."/>
            <person name="Hattori M."/>
            <person name="Sakaki Y."/>
            <person name="Ishikawa H."/>
        </authorList>
    </citation>
    <scope>NUCLEOTIDE SEQUENCE [LARGE SCALE GENOMIC DNA]</scope>
    <source>
        <strain>APS</strain>
    </source>
</reference>
<keyword id="KW-0963">Cytoplasm</keyword>
<keyword id="KW-0489">Methyltransferase</keyword>
<keyword id="KW-1185">Reference proteome</keyword>
<keyword id="KW-0698">rRNA processing</keyword>
<keyword id="KW-0949">S-adenosyl-L-methionine</keyword>
<keyword id="KW-0808">Transferase</keyword>
<feature type="chain" id="PRO_0000176208" description="Ribosomal RNA small subunit methyltransferase E">
    <location>
        <begin position="1"/>
        <end position="253"/>
    </location>
</feature>
<proteinExistence type="inferred from homology"/>
<sequence length="253" mass="29962">MFTSTAIKNKKIPRIYIEDDLDLNQFYFLSDENRHYVTKVLRMKIEDILEIFNNTHYIFFAKIIDISKKIIKIQTFKKILKNLESPLHIHLGQVISKNEKMDFTIQKSIEIGVKTITPLFFENDHFQKKRINFSNKIKRWEKIAISACRQCNRNIIPKIKIPMNVFHWCENNQNNDKKIIFHPKSTLTMKCLTEPIKYIQIIIGSERGFFNDEFQKIIKYGFIPIRLGPRILRTETASVVAITALQTMFGDFK</sequence>
<gene>
    <name type="primary">rsmE</name>
    <name type="ordered locus">BU410</name>
</gene>
<name>RSME_BUCAI</name>
<comment type="function">
    <text evidence="1">Specifically methylates the N3 position of the uracil ring of uridine 1498 (m3U1498) in 16S rRNA. Acts on the fully assembled 30S ribosomal subunit (By similarity).</text>
</comment>
<comment type="catalytic activity">
    <reaction>
        <text>uridine(1498) in 16S rRNA + S-adenosyl-L-methionine = N(3)-methyluridine(1498) in 16S rRNA + S-adenosyl-L-homocysteine + H(+)</text>
        <dbReference type="Rhea" id="RHEA:42920"/>
        <dbReference type="Rhea" id="RHEA-COMP:10283"/>
        <dbReference type="Rhea" id="RHEA-COMP:10284"/>
        <dbReference type="ChEBI" id="CHEBI:15378"/>
        <dbReference type="ChEBI" id="CHEBI:57856"/>
        <dbReference type="ChEBI" id="CHEBI:59789"/>
        <dbReference type="ChEBI" id="CHEBI:65315"/>
        <dbReference type="ChEBI" id="CHEBI:74502"/>
        <dbReference type="EC" id="2.1.1.193"/>
    </reaction>
</comment>
<comment type="subunit">
    <text evidence="1">Homodimer.</text>
</comment>
<comment type="subcellular location">
    <subcellularLocation>
        <location evidence="1">Cytoplasm</location>
    </subcellularLocation>
</comment>
<comment type="similarity">
    <text evidence="2">Belongs to the RNA methyltransferase RsmE family.</text>
</comment>
<organism>
    <name type="scientific">Buchnera aphidicola subsp. Acyrthosiphon pisum (strain APS)</name>
    <name type="common">Acyrthosiphon pisum symbiotic bacterium</name>
    <dbReference type="NCBI Taxonomy" id="107806"/>
    <lineage>
        <taxon>Bacteria</taxon>
        <taxon>Pseudomonadati</taxon>
        <taxon>Pseudomonadota</taxon>
        <taxon>Gammaproteobacteria</taxon>
        <taxon>Enterobacterales</taxon>
        <taxon>Erwiniaceae</taxon>
        <taxon>Buchnera</taxon>
    </lineage>
</organism>
<dbReference type="EC" id="2.1.1.193"/>
<dbReference type="EMBL" id="BA000003">
    <property type="protein sequence ID" value="BAB13111.1"/>
    <property type="molecule type" value="Genomic_DNA"/>
</dbReference>
<dbReference type="RefSeq" id="NP_240225.1">
    <property type="nucleotide sequence ID" value="NC_002528.1"/>
</dbReference>
<dbReference type="RefSeq" id="WP_009874366.1">
    <property type="nucleotide sequence ID" value="NZ_AP036055.1"/>
</dbReference>
<dbReference type="SMR" id="P57488"/>
<dbReference type="STRING" id="563178.BUAP5A_403"/>
<dbReference type="EnsemblBacteria" id="BAB13111">
    <property type="protein sequence ID" value="BAB13111"/>
    <property type="gene ID" value="BAB13111"/>
</dbReference>
<dbReference type="KEGG" id="buc:BU410"/>
<dbReference type="PATRIC" id="fig|107806.10.peg.422"/>
<dbReference type="eggNOG" id="COG1385">
    <property type="taxonomic scope" value="Bacteria"/>
</dbReference>
<dbReference type="HOGENOM" id="CLU_067442_5_1_6"/>
<dbReference type="Proteomes" id="UP000001806">
    <property type="component" value="Chromosome"/>
</dbReference>
<dbReference type="GO" id="GO:0005737">
    <property type="term" value="C:cytoplasm"/>
    <property type="evidence" value="ECO:0007669"/>
    <property type="project" value="UniProtKB-SubCell"/>
</dbReference>
<dbReference type="GO" id="GO:0070042">
    <property type="term" value="F:rRNA (uridine-N3-)-methyltransferase activity"/>
    <property type="evidence" value="ECO:0007669"/>
    <property type="project" value="TreeGrafter"/>
</dbReference>
<dbReference type="GO" id="GO:0070475">
    <property type="term" value="P:rRNA base methylation"/>
    <property type="evidence" value="ECO:0007669"/>
    <property type="project" value="TreeGrafter"/>
</dbReference>
<dbReference type="CDD" id="cd18084">
    <property type="entry name" value="RsmE-like"/>
    <property type="match status" value="1"/>
</dbReference>
<dbReference type="Gene3D" id="3.40.1280.10">
    <property type="match status" value="1"/>
</dbReference>
<dbReference type="Gene3D" id="2.40.240.20">
    <property type="entry name" value="Hypothetical PUA domain-like, domain 1"/>
    <property type="match status" value="1"/>
</dbReference>
<dbReference type="InterPro" id="IPR029028">
    <property type="entry name" value="Alpha/beta_knot_MTases"/>
</dbReference>
<dbReference type="InterPro" id="IPR015947">
    <property type="entry name" value="PUA-like_sf"/>
</dbReference>
<dbReference type="InterPro" id="IPR006700">
    <property type="entry name" value="RsmE"/>
</dbReference>
<dbReference type="InterPro" id="IPR046886">
    <property type="entry name" value="RsmE_MTase_dom"/>
</dbReference>
<dbReference type="InterPro" id="IPR046887">
    <property type="entry name" value="RsmE_PUA-like"/>
</dbReference>
<dbReference type="InterPro" id="IPR029026">
    <property type="entry name" value="tRNA_m1G_MTases_N"/>
</dbReference>
<dbReference type="NCBIfam" id="NF008692">
    <property type="entry name" value="PRK11713.1-5"/>
    <property type="match status" value="1"/>
</dbReference>
<dbReference type="NCBIfam" id="TIGR00046">
    <property type="entry name" value="RsmE family RNA methyltransferase"/>
    <property type="match status" value="1"/>
</dbReference>
<dbReference type="PANTHER" id="PTHR30027:SF3">
    <property type="entry name" value="16S RRNA (URACIL(1498)-N(3))-METHYLTRANSFERASE"/>
    <property type="match status" value="1"/>
</dbReference>
<dbReference type="PANTHER" id="PTHR30027">
    <property type="entry name" value="RIBOSOMAL RNA SMALL SUBUNIT METHYLTRANSFERASE E"/>
    <property type="match status" value="1"/>
</dbReference>
<dbReference type="Pfam" id="PF04452">
    <property type="entry name" value="Methyltrans_RNA"/>
    <property type="match status" value="1"/>
</dbReference>
<dbReference type="Pfam" id="PF20260">
    <property type="entry name" value="PUA_4"/>
    <property type="match status" value="1"/>
</dbReference>
<dbReference type="PIRSF" id="PIRSF015601">
    <property type="entry name" value="MTase_slr0722"/>
    <property type="match status" value="1"/>
</dbReference>
<dbReference type="SUPFAM" id="SSF75217">
    <property type="entry name" value="alpha/beta knot"/>
    <property type="match status" value="1"/>
</dbReference>
<dbReference type="SUPFAM" id="SSF88697">
    <property type="entry name" value="PUA domain-like"/>
    <property type="match status" value="1"/>
</dbReference>